<feature type="chain" id="PRO_1000004027" description="Small ribosomal subunit protein uS2">
    <location>
        <begin position="1"/>
        <end position="247"/>
    </location>
</feature>
<name>RS2_PSE14</name>
<organism>
    <name type="scientific">Pseudomonas savastanoi pv. phaseolicola (strain 1448A / Race 6)</name>
    <name type="common">Pseudomonas syringae pv. phaseolicola (strain 1448A / Race 6)</name>
    <dbReference type="NCBI Taxonomy" id="264730"/>
    <lineage>
        <taxon>Bacteria</taxon>
        <taxon>Pseudomonadati</taxon>
        <taxon>Pseudomonadota</taxon>
        <taxon>Gammaproteobacteria</taxon>
        <taxon>Pseudomonadales</taxon>
        <taxon>Pseudomonadaceae</taxon>
        <taxon>Pseudomonas</taxon>
    </lineage>
</organism>
<accession>Q48F59</accession>
<evidence type="ECO:0000255" key="1">
    <source>
        <dbReference type="HAMAP-Rule" id="MF_00291"/>
    </source>
</evidence>
<evidence type="ECO:0000305" key="2"/>
<gene>
    <name evidence="1" type="primary">rpsB</name>
    <name type="ordered locus">PSPPH_3840</name>
</gene>
<protein>
    <recommendedName>
        <fullName evidence="1">Small ribosomal subunit protein uS2</fullName>
    </recommendedName>
    <alternativeName>
        <fullName evidence="2">30S ribosomal protein S2</fullName>
    </alternativeName>
</protein>
<dbReference type="EMBL" id="CP000058">
    <property type="protein sequence ID" value="AAZ36860.1"/>
    <property type="molecule type" value="Genomic_DNA"/>
</dbReference>
<dbReference type="RefSeq" id="WP_002554730.1">
    <property type="nucleotide sequence ID" value="NC_005773.3"/>
</dbReference>
<dbReference type="SMR" id="Q48F59"/>
<dbReference type="GeneID" id="96217744"/>
<dbReference type="KEGG" id="psp:PSPPH_3840"/>
<dbReference type="eggNOG" id="COG0052">
    <property type="taxonomic scope" value="Bacteria"/>
</dbReference>
<dbReference type="HOGENOM" id="CLU_040318_1_2_6"/>
<dbReference type="Proteomes" id="UP000000551">
    <property type="component" value="Chromosome"/>
</dbReference>
<dbReference type="GO" id="GO:0022627">
    <property type="term" value="C:cytosolic small ribosomal subunit"/>
    <property type="evidence" value="ECO:0007669"/>
    <property type="project" value="TreeGrafter"/>
</dbReference>
<dbReference type="GO" id="GO:0003735">
    <property type="term" value="F:structural constituent of ribosome"/>
    <property type="evidence" value="ECO:0007669"/>
    <property type="project" value="InterPro"/>
</dbReference>
<dbReference type="GO" id="GO:0006412">
    <property type="term" value="P:translation"/>
    <property type="evidence" value="ECO:0007669"/>
    <property type="project" value="UniProtKB-UniRule"/>
</dbReference>
<dbReference type="CDD" id="cd01425">
    <property type="entry name" value="RPS2"/>
    <property type="match status" value="1"/>
</dbReference>
<dbReference type="FunFam" id="1.10.287.610:FF:000001">
    <property type="entry name" value="30S ribosomal protein S2"/>
    <property type="match status" value="1"/>
</dbReference>
<dbReference type="Gene3D" id="3.40.50.10490">
    <property type="entry name" value="Glucose-6-phosphate isomerase like protein, domain 1"/>
    <property type="match status" value="1"/>
</dbReference>
<dbReference type="Gene3D" id="1.10.287.610">
    <property type="entry name" value="Helix hairpin bin"/>
    <property type="match status" value="1"/>
</dbReference>
<dbReference type="HAMAP" id="MF_00291_B">
    <property type="entry name" value="Ribosomal_uS2_B"/>
    <property type="match status" value="1"/>
</dbReference>
<dbReference type="InterPro" id="IPR001865">
    <property type="entry name" value="Ribosomal_uS2"/>
</dbReference>
<dbReference type="InterPro" id="IPR005706">
    <property type="entry name" value="Ribosomal_uS2_bac/mit/plastid"/>
</dbReference>
<dbReference type="InterPro" id="IPR018130">
    <property type="entry name" value="Ribosomal_uS2_CS"/>
</dbReference>
<dbReference type="InterPro" id="IPR023591">
    <property type="entry name" value="Ribosomal_uS2_flav_dom_sf"/>
</dbReference>
<dbReference type="NCBIfam" id="TIGR01011">
    <property type="entry name" value="rpsB_bact"/>
    <property type="match status" value="1"/>
</dbReference>
<dbReference type="PANTHER" id="PTHR12534">
    <property type="entry name" value="30S RIBOSOMAL PROTEIN S2 PROKARYOTIC AND ORGANELLAR"/>
    <property type="match status" value="1"/>
</dbReference>
<dbReference type="PANTHER" id="PTHR12534:SF0">
    <property type="entry name" value="SMALL RIBOSOMAL SUBUNIT PROTEIN US2M"/>
    <property type="match status" value="1"/>
</dbReference>
<dbReference type="Pfam" id="PF00318">
    <property type="entry name" value="Ribosomal_S2"/>
    <property type="match status" value="1"/>
</dbReference>
<dbReference type="PRINTS" id="PR00395">
    <property type="entry name" value="RIBOSOMALS2"/>
</dbReference>
<dbReference type="SUPFAM" id="SSF52313">
    <property type="entry name" value="Ribosomal protein S2"/>
    <property type="match status" value="1"/>
</dbReference>
<dbReference type="PROSITE" id="PS00962">
    <property type="entry name" value="RIBOSOMAL_S2_1"/>
    <property type="match status" value="1"/>
</dbReference>
<dbReference type="PROSITE" id="PS00963">
    <property type="entry name" value="RIBOSOMAL_S2_2"/>
    <property type="match status" value="1"/>
</dbReference>
<sequence>MSQVNMRDMLKAGVHFGHQTRYWNPKMGKYIFGARNKIHIINLEKTLPMFNEALTFVERLASGKNKILFVGTKRSAGKIVAEEAARCGSPYVDHRWLGGMLTNFKTIRQSIKRLRELEVQSEDGTFAKLTKKEALMRTRDLEKLDRSLGGIKDMGGLPDALFVIDVDHERIAITEANKLGIPVIGVVDTNSSPEGVDYIIPGNDDAIRAIQLYMGSMADAVIRGRNNVAGGTDVFVEEAPAAAAVEG</sequence>
<reference key="1">
    <citation type="journal article" date="2005" name="J. Bacteriol.">
        <title>Whole-genome sequence analysis of Pseudomonas syringae pv. phaseolicola 1448A reveals divergence among pathovars in genes involved in virulence and transposition.</title>
        <authorList>
            <person name="Joardar V."/>
            <person name="Lindeberg M."/>
            <person name="Jackson R.W."/>
            <person name="Selengut J."/>
            <person name="Dodson R."/>
            <person name="Brinkac L.M."/>
            <person name="Daugherty S.C."/>
            <person name="DeBoy R.T."/>
            <person name="Durkin A.S."/>
            <person name="Gwinn Giglio M."/>
            <person name="Madupu R."/>
            <person name="Nelson W.C."/>
            <person name="Rosovitz M.J."/>
            <person name="Sullivan S.A."/>
            <person name="Crabtree J."/>
            <person name="Creasy T."/>
            <person name="Davidsen T.M."/>
            <person name="Haft D.H."/>
            <person name="Zafar N."/>
            <person name="Zhou L."/>
            <person name="Halpin R."/>
            <person name="Holley T."/>
            <person name="Khouri H.M."/>
            <person name="Feldblyum T.V."/>
            <person name="White O."/>
            <person name="Fraser C.M."/>
            <person name="Chatterjee A.K."/>
            <person name="Cartinhour S."/>
            <person name="Schneider D."/>
            <person name="Mansfield J.W."/>
            <person name="Collmer A."/>
            <person name="Buell R."/>
        </authorList>
    </citation>
    <scope>NUCLEOTIDE SEQUENCE [LARGE SCALE GENOMIC DNA]</scope>
    <source>
        <strain>1448A / Race 6</strain>
    </source>
</reference>
<comment type="similarity">
    <text evidence="1">Belongs to the universal ribosomal protein uS2 family.</text>
</comment>
<keyword id="KW-0687">Ribonucleoprotein</keyword>
<keyword id="KW-0689">Ribosomal protein</keyword>
<proteinExistence type="inferred from homology"/>